<feature type="chain" id="PRO_0000116369" description="Small ribosomal subunit protein eS10">
    <location>
        <begin position="1"/>
        <end position="156"/>
    </location>
</feature>
<feature type="region of interest" description="Disordered" evidence="2">
    <location>
        <begin position="91"/>
        <end position="156"/>
    </location>
</feature>
<feature type="compositionally biased region" description="Basic and acidic residues" evidence="2">
    <location>
        <begin position="95"/>
        <end position="119"/>
    </location>
</feature>
<gene>
    <name type="primary">RPS10</name>
</gene>
<sequence length="156" mass="18055">MLMSKKNRVMIYEYLFKEGVLVAKKDFHLPKHGEIDVPNLHVIRAMQSLVSRGYVKEQFCWRHYYWYLQNEGIQYLRDFLHLPPEIVPATLKRQTRPEAARPRPKEGAPRAQVGEDRAGYRRGFGGSDKKGEAGAGADTNFQFRGGFGRGRQEQEE</sequence>
<accession>O77302</accession>
<protein>
    <recommendedName>
        <fullName evidence="3">Small ribosomal subunit protein eS10</fullName>
    </recommendedName>
    <alternativeName>
        <fullName>40S ribosomal protein S10</fullName>
    </alternativeName>
</protein>
<dbReference type="EMBL" id="AJ011705">
    <property type="protein sequence ID" value="CAA09747.1"/>
    <property type="molecule type" value="mRNA"/>
</dbReference>
<dbReference type="SMR" id="O77302"/>
<dbReference type="GO" id="GO:0022627">
    <property type="term" value="C:cytosolic small ribosomal subunit"/>
    <property type="evidence" value="ECO:0007669"/>
    <property type="project" value="TreeGrafter"/>
</dbReference>
<dbReference type="GO" id="GO:0003723">
    <property type="term" value="F:RNA binding"/>
    <property type="evidence" value="ECO:0007669"/>
    <property type="project" value="TreeGrafter"/>
</dbReference>
<dbReference type="GO" id="GO:0003735">
    <property type="term" value="F:structural constituent of ribosome"/>
    <property type="evidence" value="ECO:0007669"/>
    <property type="project" value="TreeGrafter"/>
</dbReference>
<dbReference type="FunFam" id="1.10.10.10:FF:000025">
    <property type="entry name" value="40S ribosomal protein S10"/>
    <property type="match status" value="1"/>
</dbReference>
<dbReference type="Gene3D" id="1.10.10.10">
    <property type="entry name" value="Winged helix-like DNA-binding domain superfamily/Winged helix DNA-binding domain"/>
    <property type="match status" value="1"/>
</dbReference>
<dbReference type="InterPro" id="IPR005326">
    <property type="entry name" value="Plectin_eS10_N"/>
</dbReference>
<dbReference type="InterPro" id="IPR037447">
    <property type="entry name" value="Ribosomal_eS10"/>
</dbReference>
<dbReference type="InterPro" id="IPR036388">
    <property type="entry name" value="WH-like_DNA-bd_sf"/>
</dbReference>
<dbReference type="PANTHER" id="PTHR12146">
    <property type="entry name" value="40S RIBOSOMAL PROTEIN S10"/>
    <property type="match status" value="1"/>
</dbReference>
<dbReference type="PANTHER" id="PTHR12146:SF0">
    <property type="entry name" value="RIBOSOMAL PROTEIN S10"/>
    <property type="match status" value="1"/>
</dbReference>
<dbReference type="Pfam" id="PF03501">
    <property type="entry name" value="S10_plectin"/>
    <property type="match status" value="1"/>
</dbReference>
<organism>
    <name type="scientific">Lumbricus rubellus</name>
    <name type="common">Humus earthworm</name>
    <dbReference type="NCBI Taxonomy" id="35632"/>
    <lineage>
        <taxon>Eukaryota</taxon>
        <taxon>Metazoa</taxon>
        <taxon>Spiralia</taxon>
        <taxon>Lophotrochozoa</taxon>
        <taxon>Annelida</taxon>
        <taxon>Clitellata</taxon>
        <taxon>Oligochaeta</taxon>
        <taxon>Crassiclitellata</taxon>
        <taxon>Lumbricina</taxon>
        <taxon>Lumbricidae</taxon>
        <taxon>Lumbricinae</taxon>
        <taxon>Lumbricus</taxon>
    </lineage>
</organism>
<reference key="1">
    <citation type="submission" date="1998-09" db="EMBL/GenBank/DDBJ databases">
        <title>Ribosomal proteins isolated from earthworms native to heavy metal contaminated soil.</title>
        <authorList>
            <person name="Sturzenbaum S.R."/>
            <person name="Morgan A.J."/>
            <person name="Kille P."/>
        </authorList>
    </citation>
    <scope>NUCLEOTIDE SEQUENCE [MRNA]</scope>
</reference>
<comment type="subcellular location">
    <subcellularLocation>
        <location evidence="1">Cytoplasm</location>
    </subcellularLocation>
</comment>
<comment type="similarity">
    <text evidence="3">Belongs to the eukaryotic ribosomal protein eS10 family.</text>
</comment>
<proteinExistence type="evidence at transcript level"/>
<keyword id="KW-0963">Cytoplasm</keyword>
<keyword id="KW-0687">Ribonucleoprotein</keyword>
<keyword id="KW-0689">Ribosomal protein</keyword>
<name>RS10_LUMRU</name>
<evidence type="ECO:0000250" key="1"/>
<evidence type="ECO:0000256" key="2">
    <source>
        <dbReference type="SAM" id="MobiDB-lite"/>
    </source>
</evidence>
<evidence type="ECO:0000305" key="3"/>